<name>TO6BL_YEAS7</name>
<comment type="function">
    <text evidence="1">Required for formation of the SPO11-mediated double-strand breaks (DSBs) that initiate meiotic recombination. May mediate the interaction between SPO11 subunits during meiosis. Also needed for homolog chromosome pairing, synaptonemal complex formation, and for the proper timing of the first meiotic division. Not required for mitosis and mitotic DNA repair mechanisms.</text>
</comment>
<comment type="subunit">
    <text evidence="1">Interacts with REC104; seems to form a functional unit with REC104. REC102-REC104 interacts with SKI8-SPO11 and this interaction is required for proper subcellular location of the proteins during the initiation of recombination. Interacts with MEI4, REC114 and SPO11.</text>
</comment>
<comment type="subcellular location">
    <subcellularLocation>
        <location evidence="1">Nucleus</location>
    </subcellularLocation>
    <text evidence="1">Associates with chromatin during prophase. Recruitment to chromatin depends on REC104, SPO11 and SKI8.</text>
</comment>
<comment type="miscellaneous">
    <text evidence="1">Despite weak sequence similarities, may correspond to the subunit B of a SPO11-containing topoisomerase 6 complex specifically required for meiotic recombination. Retains some of the structural features of the ancestral archaeal Top6B subunit (AC O05207).</text>
</comment>
<comment type="similarity">
    <text evidence="2">Belongs to the TOP6B-like family.</text>
</comment>
<comment type="sequence caution" evidence="2">
    <conflict type="erroneous gene model prediction">
        <sequence resource="EMBL-CDS" id="EDN59240"/>
    </conflict>
</comment>
<proteinExistence type="inferred from homology"/>
<reference key="1">
    <citation type="journal article" date="2007" name="Proc. Natl. Acad. Sci. U.S.A.">
        <title>Genome sequencing and comparative analysis of Saccharomyces cerevisiae strain YJM789.</title>
        <authorList>
            <person name="Wei W."/>
            <person name="McCusker J.H."/>
            <person name="Hyman R.W."/>
            <person name="Jones T."/>
            <person name="Ning Y."/>
            <person name="Cao Z."/>
            <person name="Gu Z."/>
            <person name="Bruno D."/>
            <person name="Miranda M."/>
            <person name="Nguyen M."/>
            <person name="Wilhelmy J."/>
            <person name="Komp C."/>
            <person name="Tamse R."/>
            <person name="Wang X."/>
            <person name="Jia P."/>
            <person name="Luedi P."/>
            <person name="Oefner P.J."/>
            <person name="David L."/>
            <person name="Dietrich F.S."/>
            <person name="Li Y."/>
            <person name="Davis R.W."/>
            <person name="Steinmetz L.M."/>
        </authorList>
    </citation>
    <scope>NUCLEOTIDE SEQUENCE [LARGE SCALE GENOMIC DNA]</scope>
    <source>
        <strain>YJM789</strain>
    </source>
</reference>
<dbReference type="EMBL" id="AAFW02000171">
    <property type="protein sequence ID" value="EDN59240.1"/>
    <property type="status" value="ALT_SEQ"/>
    <property type="molecule type" value="Genomic_DNA"/>
</dbReference>
<dbReference type="SMR" id="A7A1L2"/>
<dbReference type="HOGENOM" id="CLU_094693_1_0_1"/>
<dbReference type="OrthoDB" id="32221at4893"/>
<dbReference type="Proteomes" id="UP000007060">
    <property type="component" value="Unassembled WGS sequence"/>
</dbReference>
<dbReference type="GO" id="GO:0005634">
    <property type="term" value="C:nucleus"/>
    <property type="evidence" value="ECO:0007669"/>
    <property type="project" value="UniProtKB-SubCell"/>
</dbReference>
<dbReference type="GO" id="GO:0051321">
    <property type="term" value="P:meiotic cell cycle"/>
    <property type="evidence" value="ECO:0007669"/>
    <property type="project" value="UniProtKB-KW"/>
</dbReference>
<dbReference type="InterPro" id="IPR048920">
    <property type="entry name" value="REC102"/>
</dbReference>
<dbReference type="Pfam" id="PF21736">
    <property type="entry name" value="REC102"/>
    <property type="match status" value="1"/>
</dbReference>
<sequence length="264" mass="30256">MARDITFLTVFLESCGAVNNDEAGKLLSAWTSTVRIEGPEPTDSNSLYIPLLPPGMLKIKLNFKMNDRLVTEEQELFTKLREIVGSSIRFWEEQLFYQVQDVSTIENHVILSLKCTILTDAQISTFISKPRELHTHAKGYPEIYYLSELSTTVNFFSKEGNYVEISHVIPHFNEYFSSLIVSQLEFEYPMVFSMISRLRLKWQQSSLAPISYALTSNSVLLPIMLNMIAQDKSSTTAYQILCRRRGPPIQNFQIFSIPAVTYNK</sequence>
<feature type="chain" id="PRO_0000377626" description="Meiotic recombination protein REC102">
    <location>
        <begin position="1"/>
        <end position="264"/>
    </location>
</feature>
<feature type="region of interest" description="Leucine-zipper">
    <location>
        <begin position="200"/>
        <end position="221"/>
    </location>
</feature>
<protein>
    <recommendedName>
        <fullName>Meiotic recombination protein REC102</fullName>
    </recommendedName>
</protein>
<evidence type="ECO:0000250" key="1">
    <source>
        <dbReference type="UniProtKB" id="Q02721"/>
    </source>
</evidence>
<evidence type="ECO:0000305" key="2"/>
<accession>A7A1L2</accession>
<organism>
    <name type="scientific">Saccharomyces cerevisiae (strain YJM789)</name>
    <name type="common">Baker's yeast</name>
    <dbReference type="NCBI Taxonomy" id="307796"/>
    <lineage>
        <taxon>Eukaryota</taxon>
        <taxon>Fungi</taxon>
        <taxon>Dikarya</taxon>
        <taxon>Ascomycota</taxon>
        <taxon>Saccharomycotina</taxon>
        <taxon>Saccharomycetes</taxon>
        <taxon>Saccharomycetales</taxon>
        <taxon>Saccharomycetaceae</taxon>
        <taxon>Saccharomyces</taxon>
    </lineage>
</organism>
<gene>
    <name type="primary">REC102</name>
    <name type="ORF">SCY_3890</name>
</gene>
<keyword id="KW-0469">Meiosis</keyword>
<keyword id="KW-0539">Nucleus</keyword>